<accession>Q0V9V5</accession>
<name>OLFL3_XENTR</name>
<comment type="function">
    <text evidence="1">Secreted scaffold protein that plays an essential role in dorsoventral patterning during early development. Stabilizes axial formation by restricting chordin (CHRD) activity on the dorsal side. Acts by facilitating the association between the tolloid protease BMP1 and its substrate chordin (CHRD), leading to enhance chordin (CHRD) degradation by BMP1 (By similarity).</text>
</comment>
<comment type="subunit">
    <text evidence="1">Interacts (via coiled coil domain) with BMP1 and (via olfactomedin-like domain) CHRD.</text>
</comment>
<comment type="subcellular location">
    <subcellularLocation>
        <location evidence="1">Secreted</location>
    </subcellularLocation>
</comment>
<comment type="similarity">
    <text evidence="4">Belongs to the OLFML3 family.</text>
</comment>
<gene>
    <name type="primary">olfml3</name>
</gene>
<evidence type="ECO:0000250" key="1"/>
<evidence type="ECO:0000255" key="2"/>
<evidence type="ECO:0000255" key="3">
    <source>
        <dbReference type="PROSITE-ProRule" id="PRU00446"/>
    </source>
</evidence>
<evidence type="ECO:0000305" key="4"/>
<organism>
    <name type="scientific">Xenopus tropicalis</name>
    <name type="common">Western clawed frog</name>
    <name type="synonym">Silurana tropicalis</name>
    <dbReference type="NCBI Taxonomy" id="8364"/>
    <lineage>
        <taxon>Eukaryota</taxon>
        <taxon>Metazoa</taxon>
        <taxon>Chordata</taxon>
        <taxon>Craniata</taxon>
        <taxon>Vertebrata</taxon>
        <taxon>Euteleostomi</taxon>
        <taxon>Amphibia</taxon>
        <taxon>Batrachia</taxon>
        <taxon>Anura</taxon>
        <taxon>Pipoidea</taxon>
        <taxon>Pipidae</taxon>
        <taxon>Xenopodinae</taxon>
        <taxon>Xenopus</taxon>
        <taxon>Silurana</taxon>
    </lineage>
</organism>
<dbReference type="EMBL" id="BC121380">
    <property type="protein sequence ID" value="AAI21381.1"/>
    <property type="molecule type" value="mRNA"/>
</dbReference>
<dbReference type="RefSeq" id="NP_001072318.1">
    <property type="nucleotide sequence ID" value="NM_001078850.1"/>
</dbReference>
<dbReference type="SMR" id="Q0V9V5"/>
<dbReference type="FunCoup" id="Q0V9V5">
    <property type="interactions" value="81"/>
</dbReference>
<dbReference type="STRING" id="8364.ENSXETP00000005043"/>
<dbReference type="GlyCosmos" id="Q0V9V5">
    <property type="glycosylation" value="2 sites, No reported glycans"/>
</dbReference>
<dbReference type="PaxDb" id="8364-ENSXETP00000003568"/>
<dbReference type="DNASU" id="779771"/>
<dbReference type="GeneID" id="779771"/>
<dbReference type="KEGG" id="xtr:779771"/>
<dbReference type="AGR" id="Xenbase:XB-GENE-1003397"/>
<dbReference type="CTD" id="56944"/>
<dbReference type="Xenbase" id="XB-GENE-1003397">
    <property type="gene designation" value="olfml3"/>
</dbReference>
<dbReference type="eggNOG" id="KOG3545">
    <property type="taxonomic scope" value="Eukaryota"/>
</dbReference>
<dbReference type="HOGENOM" id="CLU_035236_2_1_1"/>
<dbReference type="InParanoid" id="Q0V9V5"/>
<dbReference type="OMA" id="QQQFMEY"/>
<dbReference type="OrthoDB" id="8626508at2759"/>
<dbReference type="PhylomeDB" id="Q0V9V5"/>
<dbReference type="TreeFam" id="TF352000"/>
<dbReference type="Proteomes" id="UP000008143">
    <property type="component" value="Chromosome 2"/>
</dbReference>
<dbReference type="Bgee" id="ENSXETG00000001697">
    <property type="expression patterns" value="Expressed in heart and 8 other cell types or tissues"/>
</dbReference>
<dbReference type="GO" id="GO:0005576">
    <property type="term" value="C:extracellular region"/>
    <property type="evidence" value="ECO:0007669"/>
    <property type="project" value="UniProtKB-SubCell"/>
</dbReference>
<dbReference type="InterPro" id="IPR011043">
    <property type="entry name" value="Gal_Oxase/kelch_b-propeller"/>
</dbReference>
<dbReference type="InterPro" id="IPR003112">
    <property type="entry name" value="Olfac-like_dom"/>
</dbReference>
<dbReference type="InterPro" id="IPR050605">
    <property type="entry name" value="Olfactomedin-like_domain"/>
</dbReference>
<dbReference type="PANTHER" id="PTHR23192:SF8">
    <property type="entry name" value="OLFACTOMEDIN-LIKE PROTEIN 3"/>
    <property type="match status" value="1"/>
</dbReference>
<dbReference type="PANTHER" id="PTHR23192">
    <property type="entry name" value="OLFACTOMEDIN-RELATED"/>
    <property type="match status" value="1"/>
</dbReference>
<dbReference type="Pfam" id="PF02191">
    <property type="entry name" value="OLF"/>
    <property type="match status" value="1"/>
</dbReference>
<dbReference type="SMART" id="SM00284">
    <property type="entry name" value="OLF"/>
    <property type="match status" value="1"/>
</dbReference>
<dbReference type="SUPFAM" id="SSF50965">
    <property type="entry name" value="Galactose oxidase, central domain"/>
    <property type="match status" value="1"/>
</dbReference>
<dbReference type="PROSITE" id="PS51132">
    <property type="entry name" value="OLF"/>
    <property type="match status" value="1"/>
</dbReference>
<reference key="1">
    <citation type="submission" date="2006-08" db="EMBL/GenBank/DDBJ databases">
        <authorList>
            <consortium name="NIH - Xenopus Gene Collection (XGC) project"/>
        </authorList>
    </citation>
    <scope>NUCLEOTIDE SEQUENCE [LARGE SCALE MRNA]</scope>
    <source>
        <tissue>Brain</tissue>
    </source>
</reference>
<keyword id="KW-0175">Coiled coil</keyword>
<keyword id="KW-0217">Developmental protein</keyword>
<keyword id="KW-1015">Disulfide bond</keyword>
<keyword id="KW-0325">Glycoprotein</keyword>
<keyword id="KW-1185">Reference proteome</keyword>
<keyword id="KW-0964">Secreted</keyword>
<keyword id="KW-0732">Signal</keyword>
<sequence length="416" mass="47756">MAGIVACILLVFVTVITAQQQAVFLEYIQGRMGVLEERLSQWHDQSSRYSGELRDFKNQVLKMLENIEKERESLRNEMENTNVRVDRLEREVDYIETQNPAPPCVEIDEKLTELHDAKKKKKEKYEKITGCPAADIPGKEETDEILIPPVIRKPYCSDTISQVTAMKILKRFGSSAGLWTKDLAGNSDRIYVFDGAGNDTVYVYPRMKEFTLSSSTRKAAKIKLPFPWIGTGHIVYDGNLYYIRQDNEFQVIKFNLANKTIIDSAVLPIEQQVPVYGLSKFNYIDIVADEEGLWVIYATKENEKNICLAKLDPSSLSIEQMWDTPCPIENAESAFVVCGSLYVVYNTKLPSRSRIQCVFDVSGTISSENVPIVYFPKRYGSHSSMKYNPKEKQIYAWDDGYQMLYKLNMKHRDELY</sequence>
<proteinExistence type="evidence at transcript level"/>
<protein>
    <recommendedName>
        <fullName>Olfactomedin-like protein 3</fullName>
    </recommendedName>
</protein>
<feature type="signal peptide" evidence="2">
    <location>
        <begin position="1"/>
        <end position="18"/>
    </location>
</feature>
<feature type="chain" id="PRO_0000361566" description="Olfactomedin-like protein 3">
    <location>
        <begin position="19"/>
        <end position="416"/>
    </location>
</feature>
<feature type="domain" description="Olfactomedin-like" evidence="3">
    <location>
        <begin position="155"/>
        <end position="411"/>
    </location>
</feature>
<feature type="coiled-coil region" evidence="2">
    <location>
        <begin position="48"/>
        <end position="129"/>
    </location>
</feature>
<feature type="glycosylation site" description="N-linked (GlcNAc...) asparagine" evidence="2">
    <location>
        <position position="198"/>
    </location>
</feature>
<feature type="glycosylation site" description="N-linked (GlcNAc...) asparagine" evidence="2">
    <location>
        <position position="258"/>
    </location>
</feature>
<feature type="disulfide bond" evidence="3">
    <location>
        <begin position="156"/>
        <end position="338"/>
    </location>
</feature>